<feature type="chain" id="PRO_1000127531" description="D-aminoacyl-tRNA deacylase">
    <location>
        <begin position="1"/>
        <end position="145"/>
    </location>
</feature>
<feature type="short sequence motif" description="Gly-cisPro motif, important for rejection of L-amino acids" evidence="1">
    <location>
        <begin position="137"/>
        <end position="138"/>
    </location>
</feature>
<organism>
    <name type="scientific">Erwinia tasmaniensis (strain DSM 17950 / CFBP 7177 / CIP 109463 / NCPPB 4357 / Et1/99)</name>
    <dbReference type="NCBI Taxonomy" id="465817"/>
    <lineage>
        <taxon>Bacteria</taxon>
        <taxon>Pseudomonadati</taxon>
        <taxon>Pseudomonadota</taxon>
        <taxon>Gammaproteobacteria</taxon>
        <taxon>Enterobacterales</taxon>
        <taxon>Erwiniaceae</taxon>
        <taxon>Erwinia</taxon>
    </lineage>
</organism>
<protein>
    <recommendedName>
        <fullName evidence="1">D-aminoacyl-tRNA deacylase</fullName>
        <shortName evidence="1">DTD</shortName>
        <ecNumber evidence="1">3.1.1.96</ecNumber>
    </recommendedName>
    <alternativeName>
        <fullName evidence="1">Gly-tRNA(Ala) deacylase</fullName>
    </alternativeName>
</protein>
<dbReference type="EC" id="3.1.1.96" evidence="1"/>
<dbReference type="EMBL" id="CU468135">
    <property type="protein sequence ID" value="CAO95080.1"/>
    <property type="molecule type" value="Genomic_DNA"/>
</dbReference>
<dbReference type="RefSeq" id="WP_012439814.1">
    <property type="nucleotide sequence ID" value="NC_010694.1"/>
</dbReference>
<dbReference type="SMR" id="B2VFA6"/>
<dbReference type="STRING" id="465817.ETA_00340"/>
<dbReference type="KEGG" id="eta:ETA_00340"/>
<dbReference type="eggNOG" id="COG1490">
    <property type="taxonomic scope" value="Bacteria"/>
</dbReference>
<dbReference type="HOGENOM" id="CLU_076901_1_1_6"/>
<dbReference type="OrthoDB" id="9801395at2"/>
<dbReference type="Proteomes" id="UP000001726">
    <property type="component" value="Chromosome"/>
</dbReference>
<dbReference type="GO" id="GO:0005737">
    <property type="term" value="C:cytoplasm"/>
    <property type="evidence" value="ECO:0007669"/>
    <property type="project" value="UniProtKB-SubCell"/>
</dbReference>
<dbReference type="GO" id="GO:0051500">
    <property type="term" value="F:D-tyrosyl-tRNA(Tyr) deacylase activity"/>
    <property type="evidence" value="ECO:0007669"/>
    <property type="project" value="TreeGrafter"/>
</dbReference>
<dbReference type="GO" id="GO:0106026">
    <property type="term" value="F:Gly-tRNA(Ala) deacylase activity"/>
    <property type="evidence" value="ECO:0007669"/>
    <property type="project" value="UniProtKB-UniRule"/>
</dbReference>
<dbReference type="GO" id="GO:0043908">
    <property type="term" value="F:Ser(Gly)-tRNA(Ala) hydrolase activity"/>
    <property type="evidence" value="ECO:0007669"/>
    <property type="project" value="UniProtKB-UniRule"/>
</dbReference>
<dbReference type="GO" id="GO:0000049">
    <property type="term" value="F:tRNA binding"/>
    <property type="evidence" value="ECO:0007669"/>
    <property type="project" value="UniProtKB-UniRule"/>
</dbReference>
<dbReference type="GO" id="GO:0019478">
    <property type="term" value="P:D-amino acid catabolic process"/>
    <property type="evidence" value="ECO:0007669"/>
    <property type="project" value="UniProtKB-UniRule"/>
</dbReference>
<dbReference type="CDD" id="cd00563">
    <property type="entry name" value="Dtyr_deacylase"/>
    <property type="match status" value="1"/>
</dbReference>
<dbReference type="FunFam" id="3.50.80.10:FF:000001">
    <property type="entry name" value="D-aminoacyl-tRNA deacylase"/>
    <property type="match status" value="1"/>
</dbReference>
<dbReference type="Gene3D" id="3.50.80.10">
    <property type="entry name" value="D-tyrosyl-tRNA(Tyr) deacylase"/>
    <property type="match status" value="1"/>
</dbReference>
<dbReference type="HAMAP" id="MF_00518">
    <property type="entry name" value="Deacylase_Dtd"/>
    <property type="match status" value="1"/>
</dbReference>
<dbReference type="InterPro" id="IPR003732">
    <property type="entry name" value="Daa-tRNA_deacyls_DTD"/>
</dbReference>
<dbReference type="InterPro" id="IPR023509">
    <property type="entry name" value="DTD-like_sf"/>
</dbReference>
<dbReference type="NCBIfam" id="TIGR00256">
    <property type="entry name" value="D-aminoacyl-tRNA deacylase"/>
    <property type="match status" value="1"/>
</dbReference>
<dbReference type="PANTHER" id="PTHR10472:SF5">
    <property type="entry name" value="D-AMINOACYL-TRNA DEACYLASE 1"/>
    <property type="match status" value="1"/>
</dbReference>
<dbReference type="PANTHER" id="PTHR10472">
    <property type="entry name" value="D-TYROSYL-TRNA TYR DEACYLASE"/>
    <property type="match status" value="1"/>
</dbReference>
<dbReference type="Pfam" id="PF02580">
    <property type="entry name" value="Tyr_Deacylase"/>
    <property type="match status" value="1"/>
</dbReference>
<dbReference type="SUPFAM" id="SSF69500">
    <property type="entry name" value="DTD-like"/>
    <property type="match status" value="1"/>
</dbReference>
<proteinExistence type="inferred from homology"/>
<sequence length="145" mass="15274">MIALIQRAQQASVSVAGETTGEIGPGLLILLGVEKGDTPESASKLADKVLGYRIFGDENDKMNLNVQQAGGSVLVVSQFTLAADTKKGMRPGFSAGAAPAEAEKLYDYFAACCREKGATTETGRFAADMKVSLINDGPVTFWLQV</sequence>
<name>DTD_ERWT9</name>
<gene>
    <name evidence="1" type="primary">dtd</name>
    <name type="ordered locus">ETA_00340</name>
</gene>
<accession>B2VFA6</accession>
<reference key="1">
    <citation type="journal article" date="2008" name="Environ. Microbiol.">
        <title>The genome of Erwinia tasmaniensis strain Et1/99, a non-pathogenic bacterium in the genus Erwinia.</title>
        <authorList>
            <person name="Kube M."/>
            <person name="Migdoll A.M."/>
            <person name="Mueller I."/>
            <person name="Kuhl H."/>
            <person name="Beck A."/>
            <person name="Reinhardt R."/>
            <person name="Geider K."/>
        </authorList>
    </citation>
    <scope>NUCLEOTIDE SEQUENCE [LARGE SCALE GENOMIC DNA]</scope>
    <source>
        <strain>DSM 17950 / CFBP 7177 / CIP 109463 / NCPPB 4357 / Et1/99</strain>
    </source>
</reference>
<evidence type="ECO:0000255" key="1">
    <source>
        <dbReference type="HAMAP-Rule" id="MF_00518"/>
    </source>
</evidence>
<comment type="function">
    <text evidence="1">An aminoacyl-tRNA editing enzyme that deacylates mischarged D-aminoacyl-tRNAs. Also deacylates mischarged glycyl-tRNA(Ala), protecting cells against glycine mischarging by AlaRS. Acts via tRNA-based rather than protein-based catalysis; rejects L-amino acids rather than detecting D-amino acids in the active site. By recycling D-aminoacyl-tRNA to D-amino acids and free tRNA molecules, this enzyme counteracts the toxicity associated with the formation of D-aminoacyl-tRNA entities in vivo and helps enforce protein L-homochirality.</text>
</comment>
<comment type="catalytic activity">
    <reaction evidence="1">
        <text>glycyl-tRNA(Ala) + H2O = tRNA(Ala) + glycine + H(+)</text>
        <dbReference type="Rhea" id="RHEA:53744"/>
        <dbReference type="Rhea" id="RHEA-COMP:9657"/>
        <dbReference type="Rhea" id="RHEA-COMP:13640"/>
        <dbReference type="ChEBI" id="CHEBI:15377"/>
        <dbReference type="ChEBI" id="CHEBI:15378"/>
        <dbReference type="ChEBI" id="CHEBI:57305"/>
        <dbReference type="ChEBI" id="CHEBI:78442"/>
        <dbReference type="ChEBI" id="CHEBI:78522"/>
        <dbReference type="EC" id="3.1.1.96"/>
    </reaction>
</comment>
<comment type="catalytic activity">
    <reaction evidence="1">
        <text>a D-aminoacyl-tRNA + H2O = a tRNA + a D-alpha-amino acid + H(+)</text>
        <dbReference type="Rhea" id="RHEA:13953"/>
        <dbReference type="Rhea" id="RHEA-COMP:10123"/>
        <dbReference type="Rhea" id="RHEA-COMP:10124"/>
        <dbReference type="ChEBI" id="CHEBI:15377"/>
        <dbReference type="ChEBI" id="CHEBI:15378"/>
        <dbReference type="ChEBI" id="CHEBI:59871"/>
        <dbReference type="ChEBI" id="CHEBI:78442"/>
        <dbReference type="ChEBI" id="CHEBI:79333"/>
        <dbReference type="EC" id="3.1.1.96"/>
    </reaction>
</comment>
<comment type="subunit">
    <text evidence="1">Homodimer.</text>
</comment>
<comment type="subcellular location">
    <subcellularLocation>
        <location evidence="1">Cytoplasm</location>
    </subcellularLocation>
</comment>
<comment type="domain">
    <text evidence="1">A Gly-cisPro motif from one monomer fits into the active site of the other monomer to allow specific chiral rejection of L-amino acids.</text>
</comment>
<comment type="similarity">
    <text evidence="1">Belongs to the DTD family.</text>
</comment>
<keyword id="KW-0963">Cytoplasm</keyword>
<keyword id="KW-0378">Hydrolase</keyword>
<keyword id="KW-1185">Reference proteome</keyword>
<keyword id="KW-0694">RNA-binding</keyword>
<keyword id="KW-0820">tRNA-binding</keyword>